<comment type="function">
    <text evidence="1">Part of the high-affinity ATP-driven potassium transport (or Kdp) system, which catalyzes the hydrolysis of ATP coupled with the electrogenic transport of potassium into the cytoplasm. This subunit is responsible for energy coupling to the transport system and for the release of the potassium ions to the cytoplasm.</text>
</comment>
<comment type="catalytic activity">
    <reaction evidence="1">
        <text>K(+)(out) + ATP + H2O = K(+)(in) + ADP + phosphate + H(+)</text>
        <dbReference type="Rhea" id="RHEA:16777"/>
        <dbReference type="ChEBI" id="CHEBI:15377"/>
        <dbReference type="ChEBI" id="CHEBI:15378"/>
        <dbReference type="ChEBI" id="CHEBI:29103"/>
        <dbReference type="ChEBI" id="CHEBI:30616"/>
        <dbReference type="ChEBI" id="CHEBI:43474"/>
        <dbReference type="ChEBI" id="CHEBI:456216"/>
        <dbReference type="EC" id="7.2.2.6"/>
    </reaction>
    <physiologicalReaction direction="left-to-right" evidence="1">
        <dbReference type="Rhea" id="RHEA:16778"/>
    </physiologicalReaction>
</comment>
<comment type="subunit">
    <text evidence="1">The system is composed of three essential subunits: KdpA, KdpB and KdpC.</text>
</comment>
<comment type="subcellular location">
    <subcellularLocation>
        <location evidence="1">Cell membrane</location>
        <topology evidence="1">Multi-pass membrane protein</topology>
    </subcellularLocation>
</comment>
<comment type="similarity">
    <text evidence="1">Belongs to the cation transport ATPase (P-type) (TC 3.A.3) family. Type IA subfamily.</text>
</comment>
<keyword id="KW-0067">ATP-binding</keyword>
<keyword id="KW-1003">Cell membrane</keyword>
<keyword id="KW-0406">Ion transport</keyword>
<keyword id="KW-0460">Magnesium</keyword>
<keyword id="KW-0472">Membrane</keyword>
<keyword id="KW-0479">Metal-binding</keyword>
<keyword id="KW-0547">Nucleotide-binding</keyword>
<keyword id="KW-0597">Phosphoprotein</keyword>
<keyword id="KW-0630">Potassium</keyword>
<keyword id="KW-0633">Potassium transport</keyword>
<keyword id="KW-1278">Translocase</keyword>
<keyword id="KW-0812">Transmembrane</keyword>
<keyword id="KW-1133">Transmembrane helix</keyword>
<keyword id="KW-0813">Transport</keyword>
<name>KDPB_BACC4</name>
<proteinExistence type="inferred from homology"/>
<gene>
    <name evidence="1" type="primary">kdpB</name>
    <name type="ordered locus">BCB4264_A0798</name>
</gene>
<protein>
    <recommendedName>
        <fullName evidence="1">Potassium-transporting ATPase ATP-binding subunit</fullName>
        <ecNumber evidence="1">7.2.2.6</ecNumber>
    </recommendedName>
    <alternativeName>
        <fullName evidence="1">ATP phosphohydrolase [potassium-transporting] B chain</fullName>
    </alternativeName>
    <alternativeName>
        <fullName evidence="1">Potassium-binding and translocating subunit B</fullName>
    </alternativeName>
    <alternativeName>
        <fullName evidence="1">Potassium-translocating ATPase B chain</fullName>
    </alternativeName>
</protein>
<feature type="chain" id="PRO_1000119406" description="Potassium-transporting ATPase ATP-binding subunit">
    <location>
        <begin position="1"/>
        <end position="697"/>
    </location>
</feature>
<feature type="transmembrane region" description="Helical" evidence="1">
    <location>
        <begin position="55"/>
        <end position="75"/>
    </location>
</feature>
<feature type="transmembrane region" description="Helical" evidence="1">
    <location>
        <begin position="79"/>
        <end position="99"/>
    </location>
</feature>
<feature type="transmembrane region" description="Helical" evidence="1">
    <location>
        <begin position="245"/>
        <end position="265"/>
    </location>
</feature>
<feature type="transmembrane region" description="Helical" evidence="1">
    <location>
        <begin position="271"/>
        <end position="291"/>
    </location>
</feature>
<feature type="transmembrane region" description="Helical" evidence="1">
    <location>
        <begin position="605"/>
        <end position="625"/>
    </location>
</feature>
<feature type="transmembrane region" description="Helical" evidence="1">
    <location>
        <begin position="633"/>
        <end position="653"/>
    </location>
</feature>
<feature type="transmembrane region" description="Helical" evidence="1">
    <location>
        <begin position="677"/>
        <end position="697"/>
    </location>
</feature>
<feature type="active site" description="4-aspartylphosphate intermediate" evidence="1">
    <location>
        <position position="324"/>
    </location>
</feature>
<feature type="binding site" evidence="1">
    <location>
        <position position="361"/>
    </location>
    <ligand>
        <name>ATP</name>
        <dbReference type="ChEBI" id="CHEBI:30616"/>
    </ligand>
</feature>
<feature type="binding site" evidence="1">
    <location>
        <position position="365"/>
    </location>
    <ligand>
        <name>ATP</name>
        <dbReference type="ChEBI" id="CHEBI:30616"/>
    </ligand>
</feature>
<feature type="binding site" evidence="1">
    <location>
        <begin position="393"/>
        <end position="400"/>
    </location>
    <ligand>
        <name>ATP</name>
        <dbReference type="ChEBI" id="CHEBI:30616"/>
    </ligand>
</feature>
<feature type="binding site" evidence="1">
    <location>
        <position position="412"/>
    </location>
    <ligand>
        <name>ATP</name>
        <dbReference type="ChEBI" id="CHEBI:30616"/>
    </ligand>
</feature>
<feature type="binding site" evidence="1">
    <location>
        <position position="535"/>
    </location>
    <ligand>
        <name>Mg(2+)</name>
        <dbReference type="ChEBI" id="CHEBI:18420"/>
    </ligand>
</feature>
<feature type="binding site" evidence="1">
    <location>
        <position position="539"/>
    </location>
    <ligand>
        <name>Mg(2+)</name>
        <dbReference type="ChEBI" id="CHEBI:18420"/>
    </ligand>
</feature>
<dbReference type="EC" id="7.2.2.6" evidence="1"/>
<dbReference type="EMBL" id="CP001176">
    <property type="protein sequence ID" value="ACK63862.1"/>
    <property type="molecule type" value="Genomic_DNA"/>
</dbReference>
<dbReference type="SMR" id="B7HDF9"/>
<dbReference type="KEGG" id="bcb:BCB4264_A0798"/>
<dbReference type="HOGENOM" id="CLU_025728_2_0_9"/>
<dbReference type="Proteomes" id="UP000007096">
    <property type="component" value="Chromosome"/>
</dbReference>
<dbReference type="GO" id="GO:0005886">
    <property type="term" value="C:plasma membrane"/>
    <property type="evidence" value="ECO:0007669"/>
    <property type="project" value="UniProtKB-SubCell"/>
</dbReference>
<dbReference type="GO" id="GO:0005524">
    <property type="term" value="F:ATP binding"/>
    <property type="evidence" value="ECO:0007669"/>
    <property type="project" value="UniProtKB-UniRule"/>
</dbReference>
<dbReference type="GO" id="GO:0016887">
    <property type="term" value="F:ATP hydrolysis activity"/>
    <property type="evidence" value="ECO:0007669"/>
    <property type="project" value="InterPro"/>
</dbReference>
<dbReference type="GO" id="GO:0000287">
    <property type="term" value="F:magnesium ion binding"/>
    <property type="evidence" value="ECO:0007669"/>
    <property type="project" value="UniProtKB-UniRule"/>
</dbReference>
<dbReference type="GO" id="GO:0008556">
    <property type="term" value="F:P-type potassium transmembrane transporter activity"/>
    <property type="evidence" value="ECO:0007669"/>
    <property type="project" value="UniProtKB-UniRule"/>
</dbReference>
<dbReference type="CDD" id="cd02078">
    <property type="entry name" value="P-type_ATPase_K"/>
    <property type="match status" value="1"/>
</dbReference>
<dbReference type="FunFam" id="2.70.150.10:FF:000010">
    <property type="entry name" value="Potassium-transporting ATPase ATP-binding subunit"/>
    <property type="match status" value="1"/>
</dbReference>
<dbReference type="FunFam" id="3.40.1110.10:FF:000007">
    <property type="entry name" value="Potassium-transporting ATPase ATP-binding subunit"/>
    <property type="match status" value="1"/>
</dbReference>
<dbReference type="Gene3D" id="3.40.1110.10">
    <property type="entry name" value="Calcium-transporting ATPase, cytoplasmic domain N"/>
    <property type="match status" value="1"/>
</dbReference>
<dbReference type="Gene3D" id="2.70.150.10">
    <property type="entry name" value="Calcium-transporting ATPase, cytoplasmic transduction domain A"/>
    <property type="match status" value="1"/>
</dbReference>
<dbReference type="Gene3D" id="3.40.50.1000">
    <property type="entry name" value="HAD superfamily/HAD-like"/>
    <property type="match status" value="1"/>
</dbReference>
<dbReference type="HAMAP" id="MF_00285">
    <property type="entry name" value="KdpB"/>
    <property type="match status" value="1"/>
</dbReference>
<dbReference type="InterPro" id="IPR023299">
    <property type="entry name" value="ATPase_P-typ_cyto_dom_N"/>
</dbReference>
<dbReference type="InterPro" id="IPR018303">
    <property type="entry name" value="ATPase_P-typ_P_site"/>
</dbReference>
<dbReference type="InterPro" id="IPR023298">
    <property type="entry name" value="ATPase_P-typ_TM_dom_sf"/>
</dbReference>
<dbReference type="InterPro" id="IPR008250">
    <property type="entry name" value="ATPase_P-typ_transduc_dom_A_sf"/>
</dbReference>
<dbReference type="InterPro" id="IPR036412">
    <property type="entry name" value="HAD-like_sf"/>
</dbReference>
<dbReference type="InterPro" id="IPR023214">
    <property type="entry name" value="HAD_sf"/>
</dbReference>
<dbReference type="InterPro" id="IPR006391">
    <property type="entry name" value="P-type_ATPase_bsu_IA"/>
</dbReference>
<dbReference type="InterPro" id="IPR001757">
    <property type="entry name" value="P_typ_ATPase"/>
</dbReference>
<dbReference type="InterPro" id="IPR044492">
    <property type="entry name" value="P_typ_ATPase_HD_dom"/>
</dbReference>
<dbReference type="NCBIfam" id="TIGR01494">
    <property type="entry name" value="ATPase_P-type"/>
    <property type="match status" value="2"/>
</dbReference>
<dbReference type="NCBIfam" id="TIGR01497">
    <property type="entry name" value="kdpB"/>
    <property type="match status" value="1"/>
</dbReference>
<dbReference type="PANTHER" id="PTHR43743">
    <property type="entry name" value="POTASSIUM-TRANSPORTING ATPASE ATP-BINDING SUBUNIT"/>
    <property type="match status" value="1"/>
</dbReference>
<dbReference type="PANTHER" id="PTHR43743:SF1">
    <property type="entry name" value="POTASSIUM-TRANSPORTING ATPASE ATP-BINDING SUBUNIT"/>
    <property type="match status" value="1"/>
</dbReference>
<dbReference type="Pfam" id="PF00122">
    <property type="entry name" value="E1-E2_ATPase"/>
    <property type="match status" value="1"/>
</dbReference>
<dbReference type="Pfam" id="PF00702">
    <property type="entry name" value="Hydrolase"/>
    <property type="match status" value="1"/>
</dbReference>
<dbReference type="PRINTS" id="PR00119">
    <property type="entry name" value="CATATPASE"/>
</dbReference>
<dbReference type="SFLD" id="SFLDS00003">
    <property type="entry name" value="Haloacid_Dehalogenase"/>
    <property type="match status" value="1"/>
</dbReference>
<dbReference type="SFLD" id="SFLDF00027">
    <property type="entry name" value="p-type_atpase"/>
    <property type="match status" value="1"/>
</dbReference>
<dbReference type="SUPFAM" id="SSF81653">
    <property type="entry name" value="Calcium ATPase, transduction domain A"/>
    <property type="match status" value="1"/>
</dbReference>
<dbReference type="SUPFAM" id="SSF81665">
    <property type="entry name" value="Calcium ATPase, transmembrane domain M"/>
    <property type="match status" value="1"/>
</dbReference>
<dbReference type="SUPFAM" id="SSF56784">
    <property type="entry name" value="HAD-like"/>
    <property type="match status" value="1"/>
</dbReference>
<dbReference type="PROSITE" id="PS00154">
    <property type="entry name" value="ATPASE_E1_E2"/>
    <property type="match status" value="1"/>
</dbReference>
<reference key="1">
    <citation type="submission" date="2008-10" db="EMBL/GenBank/DDBJ databases">
        <title>Genome sequence of Bacillus cereus B4264.</title>
        <authorList>
            <person name="Dodson R.J."/>
            <person name="Durkin A.S."/>
            <person name="Rosovitz M.J."/>
            <person name="Rasko D.A."/>
            <person name="Hoffmaster A."/>
            <person name="Ravel J."/>
            <person name="Sutton G."/>
        </authorList>
    </citation>
    <scope>NUCLEOTIDE SEQUENCE [LARGE SCALE GENOMIC DNA]</scope>
    <source>
        <strain>B4264</strain>
    </source>
</reference>
<evidence type="ECO:0000255" key="1">
    <source>
        <dbReference type="HAMAP-Rule" id="MF_00285"/>
    </source>
</evidence>
<sequence length="697" mass="74407">MMRPVVVKEKQLNESQIHAVEDEVRQAKTMDRDIVTHAMKQSVAKLNPKVMIKNPIMFVVEIGFIITFILSFLPSSSSSIPGWFNITVSLILLFTVLFANFAEALAEGRGKAQADSLKQSKKDVFANVVKENGDIVQVSATDLRKGDVVIVKQGEMIPSDGEVIKGLASVDESAITGESAPVIKEAGGDFCSVTGGTMVVSDEITIVITSNPGESFIDKMISLVEGAARQKTPNEIALNTVLTSLTLIFLIVVVTLPIFTNYLGFQIDTAVLVALLVCLIPTTIGGLLSAIGIAGMDRVTKFNVLAMSGKAVEAAGDINTIILDKTGTITFGNRMAHTLLPVGNETIEQVGKWAAISSVLDETPEGRSVIEYVQGKSISYNRELAEQGEFVPFKAETRMSGVDLQDGTKVRKGAVGAVIEWVESQGGTIPKDVNQKADLISKEGGTPLVVAVDNRIYGLIYLKDTVKPGMRDRFEQLRQMGIKTVMCTGDNPLTAATIAKEAGVDEFVAECKPEDKIAVIKAEQDKGKLVAMTGDGTNDAPALAQADVGLAMNSGTTAAKEAANMIDLDSNPTKIIEVVGIGKQLLMTRGALTTFSIANDIAKYFAIIPAMFTLAIPQMEALNIMKLTSPLSAILSALIFNAVIIPLLIPLAMKGIAYKPMSSNALLSRNLLIYGLGGVIVPFIGIKVIDMIVGLFI</sequence>
<accession>B7HDF9</accession>
<organism>
    <name type="scientific">Bacillus cereus (strain B4264)</name>
    <dbReference type="NCBI Taxonomy" id="405532"/>
    <lineage>
        <taxon>Bacteria</taxon>
        <taxon>Bacillati</taxon>
        <taxon>Bacillota</taxon>
        <taxon>Bacilli</taxon>
        <taxon>Bacillales</taxon>
        <taxon>Bacillaceae</taxon>
        <taxon>Bacillus</taxon>
        <taxon>Bacillus cereus group</taxon>
    </lineage>
</organism>